<protein>
    <recommendedName>
        <fullName>Metallothionein-like protein 4A</fullName>
        <shortName>MT-4A</shortName>
    </recommendedName>
    <alternativeName>
        <fullName>EC protein homolog 1</fullName>
    </alternativeName>
</protein>
<dbReference type="EMBL" id="U90439">
    <property type="protein sequence ID" value="AAB63543.1"/>
    <property type="status" value="ALT_INIT"/>
    <property type="molecule type" value="Genomic_DNA"/>
</dbReference>
<dbReference type="EMBL" id="CP002685">
    <property type="protein sequence ID" value="AEC10060.2"/>
    <property type="molecule type" value="Genomic_DNA"/>
</dbReference>
<dbReference type="EMBL" id="Z32602">
    <property type="protein sequence ID" value="CAA83560.1"/>
    <property type="molecule type" value="mRNA"/>
</dbReference>
<dbReference type="PIR" id="G84848">
    <property type="entry name" value="G84848"/>
</dbReference>
<dbReference type="RefSeq" id="NP_181731.2">
    <molecule id="P93746-1"/>
    <property type="nucleotide sequence ID" value="NM_129764.2"/>
</dbReference>
<dbReference type="SMR" id="P93746"/>
<dbReference type="STRING" id="3702.P93746"/>
<dbReference type="PaxDb" id="3702-AT2G42000.2"/>
<dbReference type="EnsemblPlants" id="AT2G42000.1">
    <molecule id="P93746-1"/>
    <property type="protein sequence ID" value="AT2G42000.1"/>
    <property type="gene ID" value="AT2G42000"/>
</dbReference>
<dbReference type="GeneID" id="818800"/>
<dbReference type="Gramene" id="AT2G42000.1">
    <molecule id="P93746-1"/>
    <property type="protein sequence ID" value="AT2G42000.1"/>
    <property type="gene ID" value="AT2G42000"/>
</dbReference>
<dbReference type="KEGG" id="ath:AT2G42000"/>
<dbReference type="Araport" id="AT2G42000"/>
<dbReference type="TAIR" id="AT2G42000">
    <property type="gene designation" value="ATMT4A"/>
</dbReference>
<dbReference type="eggNOG" id="ENOG502S74E">
    <property type="taxonomic scope" value="Eukaryota"/>
</dbReference>
<dbReference type="InParanoid" id="P93746"/>
<dbReference type="PhylomeDB" id="P93746"/>
<dbReference type="PRO" id="PR:P93746"/>
<dbReference type="Proteomes" id="UP000006548">
    <property type="component" value="Chromosome 2"/>
</dbReference>
<dbReference type="ExpressionAtlas" id="P93746">
    <property type="expression patterns" value="baseline and differential"/>
</dbReference>
<dbReference type="GO" id="GO:0005737">
    <property type="term" value="C:cytoplasm"/>
    <property type="evidence" value="ECO:0007669"/>
    <property type="project" value="UniProtKB-SubCell"/>
</dbReference>
<dbReference type="GO" id="GO:0005634">
    <property type="term" value="C:nucleus"/>
    <property type="evidence" value="ECO:0007669"/>
    <property type="project" value="UniProtKB-SubCell"/>
</dbReference>
<dbReference type="GO" id="GO:0005886">
    <property type="term" value="C:plasma membrane"/>
    <property type="evidence" value="ECO:0007669"/>
    <property type="project" value="UniProtKB-SubCell"/>
</dbReference>
<dbReference type="GO" id="GO:0008270">
    <property type="term" value="F:zinc ion binding"/>
    <property type="evidence" value="ECO:0007669"/>
    <property type="project" value="InterPro"/>
</dbReference>
<dbReference type="InterPro" id="IPR000316">
    <property type="entry name" value="Metallthion_15"/>
</dbReference>
<dbReference type="PANTHER" id="PTHR48198">
    <property type="entry name" value="EC PROTEIN HOMOLOG"/>
    <property type="match status" value="1"/>
</dbReference>
<dbReference type="PANTHER" id="PTHR48198:SF1">
    <property type="entry name" value="METALLOTHIONEIN-LIKE PROTEIN 4A-RELATED"/>
    <property type="match status" value="1"/>
</dbReference>
<dbReference type="Pfam" id="PF02068">
    <property type="entry name" value="Metallothio_PEC"/>
    <property type="match status" value="1"/>
</dbReference>
<dbReference type="PRINTS" id="PR00877">
    <property type="entry name" value="MTPLANTPEC"/>
</dbReference>
<proteinExistence type="evidence at transcript level"/>
<accession>P93746</accession>
<accession>F4ILY8</accession>
<accession>Q42258</accession>
<evidence type="ECO:0000256" key="1">
    <source>
        <dbReference type="SAM" id="MobiDB-lite"/>
    </source>
</evidence>
<evidence type="ECO:0000269" key="2">
    <source>
    </source>
</evidence>
<evidence type="ECO:0000269" key="3">
    <source>
    </source>
</evidence>
<evidence type="ECO:0000305" key="4"/>
<gene>
    <name type="primary">MT4A</name>
    <name type="ordered locus">At2g42000</name>
    <name type="ORF">T6D20.11</name>
</gene>
<organism>
    <name type="scientific">Arabidopsis thaliana</name>
    <name type="common">Mouse-ear cress</name>
    <dbReference type="NCBI Taxonomy" id="3702"/>
    <lineage>
        <taxon>Eukaryota</taxon>
        <taxon>Viridiplantae</taxon>
        <taxon>Streptophyta</taxon>
        <taxon>Embryophyta</taxon>
        <taxon>Tracheophyta</taxon>
        <taxon>Spermatophyta</taxon>
        <taxon>Magnoliopsida</taxon>
        <taxon>eudicotyledons</taxon>
        <taxon>Gunneridae</taxon>
        <taxon>Pentapetalae</taxon>
        <taxon>rosids</taxon>
        <taxon>malvids</taxon>
        <taxon>Brassicales</taxon>
        <taxon>Brassicaceae</taxon>
        <taxon>Camelineae</taxon>
        <taxon>Arabidopsis</taxon>
    </lineage>
</organism>
<sequence length="84" mass="8290">MADTGKGSSVAGCNDSCGCPSPCPGGNSCRCRMREASAGDQGHMVCPCGEHCGCNPCNCPKTQTQTSAKGCTCGEGCTCASCAT</sequence>
<name>MT4A_ARATH</name>
<keyword id="KW-0025">Alternative splicing</keyword>
<keyword id="KW-1003">Cell membrane</keyword>
<keyword id="KW-0963">Cytoplasm</keyword>
<keyword id="KW-0472">Membrane</keyword>
<keyword id="KW-0479">Metal-binding</keyword>
<keyword id="KW-0480">Metal-thiolate cluster</keyword>
<keyword id="KW-0539">Nucleus</keyword>
<keyword id="KW-1185">Reference proteome</keyword>
<keyword id="KW-0862">Zinc</keyword>
<comment type="function">
    <text evidence="2 3 4">Metallothioneins have a high content of cysteine residues that bind various heavy metals (Probable). Functions as a metal chelator of copper (Cu) and zinc (Zn) (PubMed:18287486). Plays a role in storing and distributing Zn ion in seed (PubMed:22014117).</text>
</comment>
<comment type="subcellular location">
    <subcellularLocation>
        <location evidence="3">Cytoplasm</location>
    </subcellularLocation>
    <subcellularLocation>
        <location evidence="3">Nucleus</location>
    </subcellularLocation>
    <subcellularLocation>
        <location evidence="3">Cell membrane</location>
    </subcellularLocation>
</comment>
<comment type="alternative products">
    <event type="alternative splicing"/>
    <isoform>
        <id>P93746-1</id>
        <name>1</name>
        <sequence type="displayed"/>
    </isoform>
    <text>A number of isoforms are produced. According to EST sequences.</text>
</comment>
<comment type="tissue specificity">
    <text evidence="3">Expressed specifically in seeds.</text>
</comment>
<comment type="developmental stage">
    <text evidence="3">During embryo development, expressed from torpedo stage (6 days after pollination) to mature embryo.</text>
</comment>
<comment type="induction">
    <text evidence="3">By abscisic acid (ABA) and jasmonic acid. Down-regulated by gibberellin.</text>
</comment>
<comment type="miscellaneous">
    <text evidence="3">Plants silencing both MT4A and MT4B have reduced seed weight and reduced seedling growth after germination.</text>
</comment>
<comment type="similarity">
    <text evidence="4">Belongs to the metallothionein superfamily. Type 15 family.</text>
</comment>
<comment type="sequence caution" evidence="4">
    <conflict type="erroneous initiation">
        <sequence resource="EMBL-CDS" id="AAB63543"/>
    </conflict>
    <text>Extended N-terminus.</text>
</comment>
<reference key="1">
    <citation type="journal article" date="1999" name="Nature">
        <title>Sequence and analysis of chromosome 2 of the plant Arabidopsis thaliana.</title>
        <authorList>
            <person name="Lin X."/>
            <person name="Kaul S."/>
            <person name="Rounsley S.D."/>
            <person name="Shea T.P."/>
            <person name="Benito M.-I."/>
            <person name="Town C.D."/>
            <person name="Fujii C.Y."/>
            <person name="Mason T.M."/>
            <person name="Bowman C.L."/>
            <person name="Barnstead M.E."/>
            <person name="Feldblyum T.V."/>
            <person name="Buell C.R."/>
            <person name="Ketchum K.A."/>
            <person name="Lee J.J."/>
            <person name="Ronning C.M."/>
            <person name="Koo H.L."/>
            <person name="Moffat K.S."/>
            <person name="Cronin L.A."/>
            <person name="Shen M."/>
            <person name="Pai G."/>
            <person name="Van Aken S."/>
            <person name="Umayam L."/>
            <person name="Tallon L.J."/>
            <person name="Gill J.E."/>
            <person name="Adams M.D."/>
            <person name="Carrera A.J."/>
            <person name="Creasy T.H."/>
            <person name="Goodman H.M."/>
            <person name="Somerville C.R."/>
            <person name="Copenhaver G.P."/>
            <person name="Preuss D."/>
            <person name="Nierman W.C."/>
            <person name="White O."/>
            <person name="Eisen J.A."/>
            <person name="Salzberg S.L."/>
            <person name="Fraser C.M."/>
            <person name="Venter J.C."/>
        </authorList>
    </citation>
    <scope>NUCLEOTIDE SEQUENCE [LARGE SCALE GENOMIC DNA]</scope>
    <source>
        <strain>cv. Columbia</strain>
    </source>
</reference>
<reference key="2">
    <citation type="journal article" date="2017" name="Plant J.">
        <title>Araport11: a complete reannotation of the Arabidopsis thaliana reference genome.</title>
        <authorList>
            <person name="Cheng C.Y."/>
            <person name="Krishnakumar V."/>
            <person name="Chan A.P."/>
            <person name="Thibaud-Nissen F."/>
            <person name="Schobel S."/>
            <person name="Town C.D."/>
        </authorList>
    </citation>
    <scope>GENOME REANNOTATION</scope>
    <source>
        <strain>cv. Columbia</strain>
    </source>
</reference>
<reference key="3">
    <citation type="journal article" date="1996" name="Plant J.">
        <title>Further progress towards a catalogue of all Arabidopsis genes: analysis of a set of 5000 non-redundant ESTs.</title>
        <authorList>
            <person name="Cooke R."/>
            <person name="Raynal M."/>
            <person name="Laudie M."/>
            <person name="Grellet F."/>
            <person name="Delseny M."/>
            <person name="Morris P.-C."/>
            <person name="Guerrier D."/>
            <person name="Giraudat J."/>
            <person name="Quigley F."/>
            <person name="Clabault G."/>
            <person name="Li Y.-F."/>
            <person name="Mache R."/>
            <person name="Krivitzky M."/>
            <person name="Gy I.J.-J."/>
            <person name="Kreis M."/>
            <person name="Lecharny A."/>
            <person name="Parmentier Y."/>
            <person name="Marbach J."/>
            <person name="Fleck J."/>
            <person name="Clement B."/>
            <person name="Philipps G."/>
            <person name="Herve C."/>
            <person name="Bardet C."/>
            <person name="Tremousaygue D."/>
            <person name="Lescure B."/>
            <person name="Lacomme C."/>
            <person name="Roby D."/>
            <person name="Jourjon M.-F."/>
            <person name="Chabrier P."/>
            <person name="Charpenteau J.-L."/>
            <person name="Desprez T."/>
            <person name="Amselem J."/>
            <person name="Chiapello H."/>
            <person name="Hoefte H."/>
        </authorList>
    </citation>
    <scope>NUCLEOTIDE SEQUENCE [LARGE SCALE MRNA] OF 3-84</scope>
    <source>
        <strain>cv. Columbia</strain>
        <tissue>Dry seed</tissue>
    </source>
</reference>
<reference key="4">
    <citation type="journal article" date="2008" name="Plant Physiol.">
        <title>Examining the specific contributions of individual Arabidopsis metallothioneins to copper distribution and metal tolerance.</title>
        <authorList>
            <person name="Guo W.J."/>
            <person name="Meetam M."/>
            <person name="Goldsbrough P.B."/>
        </authorList>
    </citation>
    <scope>FUNCTION</scope>
</reference>
<reference key="5">
    <citation type="journal article" date="2012" name="Plant Cell Environ.">
        <title>Type 4 metallothionein genes are involved in regulating Zn ion accumulation in late embryo and in controlling early seedling growth in Arabidopsis.</title>
        <authorList>
            <person name="Ren Y."/>
            <person name="Liu Y."/>
            <person name="Chen H."/>
            <person name="Li G."/>
            <person name="Zhang X."/>
            <person name="Zhao J."/>
        </authorList>
    </citation>
    <scope>FUNCTION</scope>
    <scope>SUBCELLULAR LOCATION</scope>
    <scope>TISSUE SPECIFICITY</scope>
    <scope>DEVELOPMENTAL STAGE</scope>
    <scope>INDUCTION</scope>
</reference>
<feature type="chain" id="PRO_0000197423" description="Metallothionein-like protein 4A">
    <location>
        <begin position="1"/>
        <end position="84"/>
    </location>
</feature>
<feature type="region of interest" description="Disordered" evidence="1">
    <location>
        <begin position="1"/>
        <end position="26"/>
    </location>
</feature>
<feature type="sequence conflict" description="In Ref. 3; CAA83560." evidence="4" ref="3">
    <original>A</original>
    <variation>D</variation>
    <location>
        <position position="68"/>
    </location>
</feature>
<feature type="sequence conflict" description="In Ref. 3; CAA83560." evidence="4" ref="3">
    <original>A</original>
    <variation>D</variation>
    <location>
        <position position="83"/>
    </location>
</feature>